<gene>
    <name type="primary">pgl</name>
    <name type="ordered locus">XF_1063</name>
</gene>
<organism>
    <name type="scientific">Xylella fastidiosa (strain 9a5c)</name>
    <dbReference type="NCBI Taxonomy" id="160492"/>
    <lineage>
        <taxon>Bacteria</taxon>
        <taxon>Pseudomonadati</taxon>
        <taxon>Pseudomonadota</taxon>
        <taxon>Gammaproteobacteria</taxon>
        <taxon>Lysobacterales</taxon>
        <taxon>Lysobacteraceae</taxon>
        <taxon>Xylella</taxon>
    </lineage>
</organism>
<keyword id="KW-0378">Hydrolase</keyword>
<name>6PGL_XYLFA</name>
<reference key="1">
    <citation type="journal article" date="2000" name="Nature">
        <title>The genome sequence of the plant pathogen Xylella fastidiosa.</title>
        <authorList>
            <person name="Simpson A.J.G."/>
            <person name="Reinach F.C."/>
            <person name="Arruda P."/>
            <person name="Abreu F.A."/>
            <person name="Acencio M."/>
            <person name="Alvarenga R."/>
            <person name="Alves L.M.C."/>
            <person name="Araya J.E."/>
            <person name="Baia G.S."/>
            <person name="Baptista C.S."/>
            <person name="Barros M.H."/>
            <person name="Bonaccorsi E.D."/>
            <person name="Bordin S."/>
            <person name="Bove J.M."/>
            <person name="Briones M.R.S."/>
            <person name="Bueno M.R.P."/>
            <person name="Camargo A.A."/>
            <person name="Camargo L.E.A."/>
            <person name="Carraro D.M."/>
            <person name="Carrer H."/>
            <person name="Colauto N.B."/>
            <person name="Colombo C."/>
            <person name="Costa F.F."/>
            <person name="Costa M.C.R."/>
            <person name="Costa-Neto C.M."/>
            <person name="Coutinho L.L."/>
            <person name="Cristofani M."/>
            <person name="Dias-Neto E."/>
            <person name="Docena C."/>
            <person name="El-Dorry H."/>
            <person name="Facincani A.P."/>
            <person name="Ferreira A.J.S."/>
            <person name="Ferreira V.C.A."/>
            <person name="Ferro J.A."/>
            <person name="Fraga J.S."/>
            <person name="Franca S.C."/>
            <person name="Franco M.C."/>
            <person name="Frohme M."/>
            <person name="Furlan L.R."/>
            <person name="Garnier M."/>
            <person name="Goldman G.H."/>
            <person name="Goldman M.H.S."/>
            <person name="Gomes S.L."/>
            <person name="Gruber A."/>
            <person name="Ho P.L."/>
            <person name="Hoheisel J.D."/>
            <person name="Junqueira M.L."/>
            <person name="Kemper E.L."/>
            <person name="Kitajima J.P."/>
            <person name="Krieger J.E."/>
            <person name="Kuramae E.E."/>
            <person name="Laigret F."/>
            <person name="Lambais M.R."/>
            <person name="Leite L.C.C."/>
            <person name="Lemos E.G.M."/>
            <person name="Lemos M.V.F."/>
            <person name="Lopes S.A."/>
            <person name="Lopes C.R."/>
            <person name="Machado J.A."/>
            <person name="Machado M.A."/>
            <person name="Madeira A.M.B.N."/>
            <person name="Madeira H.M.F."/>
            <person name="Marino C.L."/>
            <person name="Marques M.V."/>
            <person name="Martins E.A.L."/>
            <person name="Martins E.M.F."/>
            <person name="Matsukuma A.Y."/>
            <person name="Menck C.F.M."/>
            <person name="Miracca E.C."/>
            <person name="Miyaki C.Y."/>
            <person name="Monteiro-Vitorello C.B."/>
            <person name="Moon D.H."/>
            <person name="Nagai M.A."/>
            <person name="Nascimento A.L.T.O."/>
            <person name="Netto L.E.S."/>
            <person name="Nhani A. Jr."/>
            <person name="Nobrega F.G."/>
            <person name="Nunes L.R."/>
            <person name="Oliveira M.A."/>
            <person name="de Oliveira M.C."/>
            <person name="de Oliveira R.C."/>
            <person name="Palmieri D.A."/>
            <person name="Paris A."/>
            <person name="Peixoto B.R."/>
            <person name="Pereira G.A.G."/>
            <person name="Pereira H.A. Jr."/>
            <person name="Pesquero J.B."/>
            <person name="Quaggio R.B."/>
            <person name="Roberto P.G."/>
            <person name="Rodrigues V."/>
            <person name="de Rosa A.J.M."/>
            <person name="de Rosa V.E. Jr."/>
            <person name="de Sa R.G."/>
            <person name="Santelli R.V."/>
            <person name="Sawasaki H.E."/>
            <person name="da Silva A.C.R."/>
            <person name="da Silva A.M."/>
            <person name="da Silva F.R."/>
            <person name="Silva W.A. Jr."/>
            <person name="da Silveira J.F."/>
            <person name="Silvestri M.L.Z."/>
            <person name="Siqueira W.J."/>
            <person name="de Souza A.A."/>
            <person name="de Souza A.P."/>
            <person name="Terenzi M.F."/>
            <person name="Truffi D."/>
            <person name="Tsai S.M."/>
            <person name="Tsuhako M.H."/>
            <person name="Vallada H."/>
            <person name="Van Sluys M.A."/>
            <person name="Verjovski-Almeida S."/>
            <person name="Vettore A.L."/>
            <person name="Zago M.A."/>
            <person name="Zatz M."/>
            <person name="Meidanis J."/>
            <person name="Setubal J.C."/>
        </authorList>
    </citation>
    <scope>NUCLEOTIDE SEQUENCE [LARGE SCALE GENOMIC DNA]</scope>
    <source>
        <strain>9a5c</strain>
    </source>
</reference>
<accession>Q9PEG5</accession>
<comment type="function">
    <text>Hydrolysis of 6-phosphogluconolactone to 6-phosphogluconate.</text>
</comment>
<comment type="catalytic activity">
    <reaction>
        <text>6-phospho-D-glucono-1,5-lactone + H2O = 6-phospho-D-gluconate + H(+)</text>
        <dbReference type="Rhea" id="RHEA:12556"/>
        <dbReference type="ChEBI" id="CHEBI:15377"/>
        <dbReference type="ChEBI" id="CHEBI:15378"/>
        <dbReference type="ChEBI" id="CHEBI:57955"/>
        <dbReference type="ChEBI" id="CHEBI:58759"/>
        <dbReference type="EC" id="3.1.1.31"/>
    </reaction>
</comment>
<comment type="pathway">
    <text>Carbohydrate degradation; pentose phosphate pathway; D-ribulose 5-phosphate from D-glucose 6-phosphate (oxidative stage): step 2/3.</text>
</comment>
<comment type="similarity">
    <text evidence="1">Belongs to the glucosamine/galactosamine-6-phosphate isomerase family. 6-phosphogluconolactonase subfamily.</text>
</comment>
<dbReference type="EC" id="3.1.1.31"/>
<dbReference type="EMBL" id="AE003849">
    <property type="protein sequence ID" value="AAF83873.1"/>
    <property type="molecule type" value="Genomic_DNA"/>
</dbReference>
<dbReference type="PIR" id="D82727">
    <property type="entry name" value="D82727"/>
</dbReference>
<dbReference type="RefSeq" id="WP_010893582.1">
    <property type="nucleotide sequence ID" value="NC_002488.3"/>
</dbReference>
<dbReference type="SMR" id="Q9PEG5"/>
<dbReference type="STRING" id="160492.XF_1063"/>
<dbReference type="KEGG" id="xfa:XF_1063"/>
<dbReference type="PATRIC" id="fig|160492.11.peg.1130"/>
<dbReference type="eggNOG" id="COG0363">
    <property type="taxonomic scope" value="Bacteria"/>
</dbReference>
<dbReference type="HOGENOM" id="CLU_053947_2_1_6"/>
<dbReference type="UniPathway" id="UPA00115">
    <property type="reaction ID" value="UER00409"/>
</dbReference>
<dbReference type="Proteomes" id="UP000000812">
    <property type="component" value="Chromosome"/>
</dbReference>
<dbReference type="GO" id="GO:0017057">
    <property type="term" value="F:6-phosphogluconolactonase activity"/>
    <property type="evidence" value="ECO:0007669"/>
    <property type="project" value="UniProtKB-EC"/>
</dbReference>
<dbReference type="GO" id="GO:0005975">
    <property type="term" value="P:carbohydrate metabolic process"/>
    <property type="evidence" value="ECO:0007669"/>
    <property type="project" value="InterPro"/>
</dbReference>
<dbReference type="GO" id="GO:0006098">
    <property type="term" value="P:pentose-phosphate shunt"/>
    <property type="evidence" value="ECO:0007669"/>
    <property type="project" value="UniProtKB-UniPathway"/>
</dbReference>
<dbReference type="CDD" id="cd01400">
    <property type="entry name" value="6PGL"/>
    <property type="match status" value="1"/>
</dbReference>
<dbReference type="Gene3D" id="3.40.50.1360">
    <property type="match status" value="1"/>
</dbReference>
<dbReference type="InterPro" id="IPR005900">
    <property type="entry name" value="6-phosphogluconolactonase_DevB"/>
</dbReference>
<dbReference type="InterPro" id="IPR006148">
    <property type="entry name" value="Glc/Gal-6P_isomerase"/>
</dbReference>
<dbReference type="InterPro" id="IPR037171">
    <property type="entry name" value="NagB/RpiA_transferase-like"/>
</dbReference>
<dbReference type="InterPro" id="IPR039104">
    <property type="entry name" value="PGLS"/>
</dbReference>
<dbReference type="PANTHER" id="PTHR11054">
    <property type="entry name" value="6-PHOSPHOGLUCONOLACTONASE"/>
    <property type="match status" value="1"/>
</dbReference>
<dbReference type="PANTHER" id="PTHR11054:SF0">
    <property type="entry name" value="6-PHOSPHOGLUCONOLACTONASE"/>
    <property type="match status" value="1"/>
</dbReference>
<dbReference type="Pfam" id="PF01182">
    <property type="entry name" value="Glucosamine_iso"/>
    <property type="match status" value="1"/>
</dbReference>
<dbReference type="SUPFAM" id="SSF100950">
    <property type="entry name" value="NagB/RpiA/CoA transferase-like"/>
    <property type="match status" value="1"/>
</dbReference>
<evidence type="ECO:0000305" key="1"/>
<protein>
    <recommendedName>
        <fullName>6-phosphogluconolactonase</fullName>
        <shortName>6PGL</shortName>
        <ecNumber>3.1.1.31</ecNumber>
    </recommendedName>
</protein>
<proteinExistence type="inferred from homology"/>
<sequence length="239" mass="26281">MTPPNDARITLMNYDDPLEWAQSVTRELENILLQEITQRGRASLLLSGGTTPARVYETLATRPLDWSKIDIGLVDERWLSPQDKDSNAWLVRHTLLEHAKHATFLPLIRPGKTLNQCVHDANLQITHSPPPCAAVLGMGNDGHTASLFPGSLDLPKAISTLQPYVALDATGCPGAGVWPLRITLTPAGLSNIPHRLLLLCGKQKMQVLETALSCKDALDYPIRTAIDLPNARLRVHWCA</sequence>
<feature type="chain" id="PRO_0000090110" description="6-phosphogluconolactonase">
    <location>
        <begin position="1"/>
        <end position="239"/>
    </location>
</feature>